<gene>
    <name type="primary">kdgK</name>
    <name type="synonym">yhjI</name>
    <name type="ordered locus">b3526</name>
    <name type="ordered locus">JW5668</name>
</gene>
<organism>
    <name type="scientific">Escherichia coli (strain K12)</name>
    <dbReference type="NCBI Taxonomy" id="83333"/>
    <lineage>
        <taxon>Bacteria</taxon>
        <taxon>Pseudomonadati</taxon>
        <taxon>Pseudomonadota</taxon>
        <taxon>Gammaproteobacteria</taxon>
        <taxon>Enterobacterales</taxon>
        <taxon>Enterobacteriaceae</taxon>
        <taxon>Escherichia</taxon>
    </lineage>
</organism>
<dbReference type="EC" id="2.7.1.45"/>
<dbReference type="EMBL" id="U00039">
    <property type="protein sequence ID" value="AAB18503.1"/>
    <property type="status" value="ALT_INIT"/>
    <property type="molecule type" value="Genomic_DNA"/>
</dbReference>
<dbReference type="EMBL" id="U00096">
    <property type="protein sequence ID" value="AAC76551.2"/>
    <property type="molecule type" value="Genomic_DNA"/>
</dbReference>
<dbReference type="EMBL" id="AP009048">
    <property type="protein sequence ID" value="BAE77768.1"/>
    <property type="molecule type" value="Genomic_DNA"/>
</dbReference>
<dbReference type="PIR" id="S47747">
    <property type="entry name" value="S47747"/>
</dbReference>
<dbReference type="RefSeq" id="NP_417983.2">
    <property type="nucleotide sequence ID" value="NC_000913.3"/>
</dbReference>
<dbReference type="RefSeq" id="WP_000037562.1">
    <property type="nucleotide sequence ID" value="NZ_SSZK01000039.1"/>
</dbReference>
<dbReference type="SMR" id="P37647"/>
<dbReference type="BioGRID" id="4262528">
    <property type="interactions" value="10"/>
</dbReference>
<dbReference type="BioGRID" id="852349">
    <property type="interactions" value="2"/>
</dbReference>
<dbReference type="DIP" id="DIP-10056N"/>
<dbReference type="FunCoup" id="P37647">
    <property type="interactions" value="488"/>
</dbReference>
<dbReference type="IntAct" id="P37647">
    <property type="interactions" value="5"/>
</dbReference>
<dbReference type="STRING" id="511145.b3526"/>
<dbReference type="jPOST" id="P37647"/>
<dbReference type="PaxDb" id="511145-b3526"/>
<dbReference type="EnsemblBacteria" id="AAC76551">
    <property type="protein sequence ID" value="AAC76551"/>
    <property type="gene ID" value="b3526"/>
</dbReference>
<dbReference type="GeneID" id="948041"/>
<dbReference type="KEGG" id="ecj:JW5668"/>
<dbReference type="KEGG" id="eco:b3526"/>
<dbReference type="KEGG" id="ecoc:C3026_19105"/>
<dbReference type="PATRIC" id="fig|511145.12.peg.3636"/>
<dbReference type="EchoBASE" id="EB2163"/>
<dbReference type="eggNOG" id="COG0524">
    <property type="taxonomic scope" value="Bacteria"/>
</dbReference>
<dbReference type="HOGENOM" id="CLU_027634_8_1_6"/>
<dbReference type="InParanoid" id="P37647"/>
<dbReference type="OMA" id="MAMFYAN"/>
<dbReference type="OrthoDB" id="9776822at2"/>
<dbReference type="PhylomeDB" id="P37647"/>
<dbReference type="BioCyc" id="EcoCyc:DEOXYGLUCONOKIN-MONOMER"/>
<dbReference type="BioCyc" id="MetaCyc:DEOXYGLUCONOKIN-MONOMER"/>
<dbReference type="UniPathway" id="UPA00856">
    <property type="reaction ID" value="UER00828"/>
</dbReference>
<dbReference type="PRO" id="PR:P37647"/>
<dbReference type="Proteomes" id="UP000000625">
    <property type="component" value="Chromosome"/>
</dbReference>
<dbReference type="GO" id="GO:0005829">
    <property type="term" value="C:cytosol"/>
    <property type="evidence" value="ECO:0000314"/>
    <property type="project" value="EcoCyc"/>
</dbReference>
<dbReference type="GO" id="GO:0008673">
    <property type="term" value="F:2-dehydro-3-deoxygluconokinase activity"/>
    <property type="evidence" value="ECO:0000314"/>
    <property type="project" value="EcoCyc"/>
</dbReference>
<dbReference type="GO" id="GO:0005524">
    <property type="term" value="F:ATP binding"/>
    <property type="evidence" value="ECO:0007669"/>
    <property type="project" value="UniProtKB-KW"/>
</dbReference>
<dbReference type="GO" id="GO:0019698">
    <property type="term" value="P:D-galacturonate catabolic process"/>
    <property type="evidence" value="ECO:0000315"/>
    <property type="project" value="EcoCyc"/>
</dbReference>
<dbReference type="GO" id="GO:0042840">
    <property type="term" value="P:D-glucuronate catabolic process"/>
    <property type="evidence" value="ECO:0000315"/>
    <property type="project" value="EcoCyc"/>
</dbReference>
<dbReference type="GO" id="GO:0006974">
    <property type="term" value="P:DNA damage response"/>
    <property type="evidence" value="ECO:0000270"/>
    <property type="project" value="EcoliWiki"/>
</dbReference>
<dbReference type="CDD" id="cd01166">
    <property type="entry name" value="KdgK"/>
    <property type="match status" value="1"/>
</dbReference>
<dbReference type="FunFam" id="3.40.1190.20:FF:000011">
    <property type="entry name" value="2-dehydro-3-deoxygluconokinase, putative"/>
    <property type="match status" value="1"/>
</dbReference>
<dbReference type="Gene3D" id="3.40.1190.20">
    <property type="match status" value="1"/>
</dbReference>
<dbReference type="InterPro" id="IPR002173">
    <property type="entry name" value="Carboh/pur_kinase_PfkB_CS"/>
</dbReference>
<dbReference type="InterPro" id="IPR050306">
    <property type="entry name" value="PfkB_Carbo_kinase"/>
</dbReference>
<dbReference type="InterPro" id="IPR011611">
    <property type="entry name" value="PfkB_dom"/>
</dbReference>
<dbReference type="InterPro" id="IPR029056">
    <property type="entry name" value="Ribokinase-like"/>
</dbReference>
<dbReference type="PANTHER" id="PTHR43085:SF15">
    <property type="entry name" value="2-DEHYDRO-3-DEOXYGLUCONOKINASE"/>
    <property type="match status" value="1"/>
</dbReference>
<dbReference type="PANTHER" id="PTHR43085">
    <property type="entry name" value="HEXOKINASE FAMILY MEMBER"/>
    <property type="match status" value="1"/>
</dbReference>
<dbReference type="Pfam" id="PF00294">
    <property type="entry name" value="PfkB"/>
    <property type="match status" value="1"/>
</dbReference>
<dbReference type="SUPFAM" id="SSF53613">
    <property type="entry name" value="Ribokinase-like"/>
    <property type="match status" value="1"/>
</dbReference>
<dbReference type="PROSITE" id="PS00584">
    <property type="entry name" value="PFKB_KINASES_2"/>
    <property type="match status" value="1"/>
</dbReference>
<comment type="function">
    <text evidence="2">Catalyzes the phosphorylation of 2-keto-3-deoxygluconate (KDG) to produce 2-keto-3-deoxy-6-phosphogluconate (KDPG).</text>
</comment>
<comment type="catalytic activity">
    <reaction evidence="2">
        <text>2-dehydro-3-deoxy-D-gluconate + ATP = 2-dehydro-3-deoxy-6-phospho-D-gluconate + ADP + H(+)</text>
        <dbReference type="Rhea" id="RHEA:14797"/>
        <dbReference type="ChEBI" id="CHEBI:15378"/>
        <dbReference type="ChEBI" id="CHEBI:30616"/>
        <dbReference type="ChEBI" id="CHEBI:57569"/>
        <dbReference type="ChEBI" id="CHEBI:57990"/>
        <dbReference type="ChEBI" id="CHEBI:456216"/>
        <dbReference type="EC" id="2.7.1.45"/>
    </reaction>
</comment>
<comment type="biophysicochemical properties">
    <kinetics>
        <KM evidence="2">1 uM for ATP</KM>
        <KM evidence="2">1 uM for KDG</KM>
    </kinetics>
    <phDependence>
        <text evidence="2">Optimum pH is around 6.</text>
    </phDependence>
</comment>
<comment type="pathway">
    <text>Carbohydrate acid metabolism; 2-dehydro-3-deoxy-D-gluconate degradation; D-glyceraldehyde 3-phosphate and pyruvate from 2-dehydro-3-deoxy-D-gluconate: step 1/2.</text>
</comment>
<comment type="similarity">
    <text evidence="3">Belongs to the carbohydrate kinase PfkB family.</text>
</comment>
<comment type="sequence caution" evidence="3">
    <conflict type="erroneous initiation">
        <sequence resource="EMBL-CDS" id="AAB18503"/>
    </conflict>
    <text>Extended N-terminus.</text>
</comment>
<feature type="chain" id="PRO_0000080085" description="2-dehydro-3-deoxygluconokinase">
    <location>
        <begin position="1"/>
        <end position="309"/>
    </location>
</feature>
<feature type="active site" description="Proton acceptor" evidence="1">
    <location>
        <position position="264"/>
    </location>
</feature>
<feature type="binding site" evidence="1">
    <location>
        <begin position="28"/>
        <end position="32"/>
    </location>
    <ligand>
        <name>substrate</name>
    </ligand>
</feature>
<feature type="binding site" evidence="1">
    <location>
        <position position="88"/>
    </location>
    <ligand>
        <name>substrate</name>
    </ligand>
</feature>
<feature type="binding site" evidence="1">
    <location>
        <begin position="102"/>
        <end position="104"/>
    </location>
    <ligand>
        <name>substrate</name>
    </ligand>
</feature>
<feature type="binding site" evidence="1">
    <location>
        <begin position="168"/>
        <end position="170"/>
    </location>
    <ligand>
        <name>ATP</name>
        <dbReference type="ChEBI" id="CHEBI:30616"/>
    </ligand>
</feature>
<feature type="binding site" evidence="1">
    <location>
        <position position="170"/>
    </location>
    <ligand>
        <name>substrate</name>
    </ligand>
</feature>
<feature type="binding site" evidence="1">
    <location>
        <begin position="228"/>
        <end position="233"/>
    </location>
    <ligand>
        <name>ATP</name>
        <dbReference type="ChEBI" id="CHEBI:30616"/>
    </ligand>
</feature>
<feature type="binding site" evidence="1">
    <location>
        <begin position="261"/>
        <end position="264"/>
    </location>
    <ligand>
        <name>ATP</name>
        <dbReference type="ChEBI" id="CHEBI:30616"/>
    </ligand>
</feature>
<feature type="binding site" evidence="1">
    <location>
        <position position="264"/>
    </location>
    <ligand>
        <name>substrate</name>
    </ligand>
</feature>
<keyword id="KW-0067">ATP-binding</keyword>
<keyword id="KW-0119">Carbohydrate metabolism</keyword>
<keyword id="KW-0418">Kinase</keyword>
<keyword id="KW-0547">Nucleotide-binding</keyword>
<keyword id="KW-1185">Reference proteome</keyword>
<keyword id="KW-0808">Transferase</keyword>
<protein>
    <recommendedName>
        <fullName>2-dehydro-3-deoxygluconokinase</fullName>
        <ecNumber>2.7.1.45</ecNumber>
    </recommendedName>
    <alternativeName>
        <fullName>2-keto-3-deoxygluconokinase</fullName>
    </alternativeName>
    <alternativeName>
        <fullName>3-deoxy-2-oxo-D-gluconate kinase</fullName>
    </alternativeName>
    <alternativeName>
        <fullName>KDG kinase</fullName>
    </alternativeName>
</protein>
<evidence type="ECO:0000250" key="1">
    <source>
        <dbReference type="UniProtKB" id="Q97U29"/>
    </source>
</evidence>
<evidence type="ECO:0000269" key="2">
    <source>
    </source>
</evidence>
<evidence type="ECO:0000305" key="3"/>
<name>KDGK_ECOLI</name>
<accession>P37647</accession>
<accession>P78117</accession>
<accession>Q2M7I8</accession>
<proteinExistence type="evidence at protein level"/>
<sequence>MSKKIAVIGECMIELSEKGADVKRGFGGDTLNTSVYIARQVDPAALTVHYVTALGTDSFSQQMLDAWHGENVDTSLTQRMENRLPGLYYIETDSTGERTFYYWRNEAAAKFWLESEQSAAICEELANFDYLYLSGISLAILSPTSREKLLSLLRECRANGGKVIFDNNYRPRLWASKEETQQVYQQMLECTDIAFLTLDDEDALWGQQPVEDVIARTHNAGVKEVVVKRGADSCLVSIAGEGLVDVPAVKLPKEKVIDTTAAGDSFSAGYLAVRLTGGSAEDAAKRGHLTASTVIQYRGAIIPREAMPA</sequence>
<reference key="1">
    <citation type="journal article" date="1994" name="Nucleic Acids Res.">
        <title>Analysis of the Escherichia coli genome. V. DNA sequence of the region from 76.0 to 81.5 minutes.</title>
        <authorList>
            <person name="Sofia H.J."/>
            <person name="Burland V."/>
            <person name="Daniels D.L."/>
            <person name="Plunkett G. III"/>
            <person name="Blattner F.R."/>
        </authorList>
    </citation>
    <scope>NUCLEOTIDE SEQUENCE [LARGE SCALE GENOMIC DNA]</scope>
    <source>
        <strain>K12 / MG1655 / ATCC 47076</strain>
    </source>
</reference>
<reference key="2">
    <citation type="journal article" date="1997" name="Science">
        <title>The complete genome sequence of Escherichia coli K-12.</title>
        <authorList>
            <person name="Blattner F.R."/>
            <person name="Plunkett G. III"/>
            <person name="Bloch C.A."/>
            <person name="Perna N.T."/>
            <person name="Burland V."/>
            <person name="Riley M."/>
            <person name="Collado-Vides J."/>
            <person name="Glasner J.D."/>
            <person name="Rode C.K."/>
            <person name="Mayhew G.F."/>
            <person name="Gregor J."/>
            <person name="Davis N.W."/>
            <person name="Kirkpatrick H.A."/>
            <person name="Goeden M.A."/>
            <person name="Rose D.J."/>
            <person name="Mau B."/>
            <person name="Shao Y."/>
        </authorList>
    </citation>
    <scope>NUCLEOTIDE SEQUENCE [LARGE SCALE GENOMIC DNA]</scope>
    <source>
        <strain>K12 / MG1655 / ATCC 47076</strain>
    </source>
</reference>
<reference key="3">
    <citation type="journal article" date="2006" name="Mol. Syst. Biol.">
        <title>Highly accurate genome sequences of Escherichia coli K-12 strains MG1655 and W3110.</title>
        <authorList>
            <person name="Hayashi K."/>
            <person name="Morooka N."/>
            <person name="Yamamoto Y."/>
            <person name="Fujita K."/>
            <person name="Isono K."/>
            <person name="Choi S."/>
            <person name="Ohtsubo E."/>
            <person name="Baba T."/>
            <person name="Wanner B.L."/>
            <person name="Mori H."/>
            <person name="Horiuchi T."/>
        </authorList>
    </citation>
    <scope>NUCLEOTIDE SEQUENCE [LARGE SCALE GENOMIC DNA]</scope>
    <source>
        <strain>K12 / W3110 / ATCC 27325 / DSM 5911</strain>
    </source>
</reference>
<reference key="4">
    <citation type="journal article" date="1971" name="Biochimie">
        <title>Study of the common degradative pathway of hexuronates in Escherichia coli K 12. Purification, properties and individuality of 2-keto-3-deoxy-D-gluconnokinase.</title>
        <authorList>
            <person name="Pouyssegur J."/>
            <person name="Stoeber F."/>
        </authorList>
    </citation>
    <scope>FUNCTION</scope>
    <scope>CATALYTIC ACTIVITY</scope>
    <scope>BIOPHYSICOCHEMICAL PROPERTIES</scope>
</reference>